<proteinExistence type="inferred from homology"/>
<organism>
    <name type="scientific">Rickettsia rickettsii (strain Sheila Smith)</name>
    <dbReference type="NCBI Taxonomy" id="392021"/>
    <lineage>
        <taxon>Bacteria</taxon>
        <taxon>Pseudomonadati</taxon>
        <taxon>Pseudomonadota</taxon>
        <taxon>Alphaproteobacteria</taxon>
        <taxon>Rickettsiales</taxon>
        <taxon>Rickettsiaceae</taxon>
        <taxon>Rickettsieae</taxon>
        <taxon>Rickettsia</taxon>
        <taxon>spotted fever group</taxon>
    </lineage>
</organism>
<accession>A8GRY1</accession>
<comment type="function">
    <text evidence="1">This enzyme is involved in nucleotide metabolism: it produces dUMP, the immediate precursor of thymidine nucleotides and it decreases the intracellular concentration of dUTP so that uracil cannot be incorporated into DNA.</text>
</comment>
<comment type="catalytic activity">
    <reaction evidence="1">
        <text>dUTP + H2O = dUMP + diphosphate + H(+)</text>
        <dbReference type="Rhea" id="RHEA:10248"/>
        <dbReference type="ChEBI" id="CHEBI:15377"/>
        <dbReference type="ChEBI" id="CHEBI:15378"/>
        <dbReference type="ChEBI" id="CHEBI:33019"/>
        <dbReference type="ChEBI" id="CHEBI:61555"/>
        <dbReference type="ChEBI" id="CHEBI:246422"/>
        <dbReference type="EC" id="3.6.1.23"/>
    </reaction>
</comment>
<comment type="cofactor">
    <cofactor evidence="1">
        <name>Mg(2+)</name>
        <dbReference type="ChEBI" id="CHEBI:18420"/>
    </cofactor>
</comment>
<comment type="pathway">
    <text evidence="1">Pyrimidine metabolism; dUMP biosynthesis; dUMP from dCTP (dUTP route): step 2/2.</text>
</comment>
<comment type="similarity">
    <text evidence="1">Belongs to the dUTPase family.</text>
</comment>
<name>DUT_RICRS</name>
<keyword id="KW-0378">Hydrolase</keyword>
<keyword id="KW-0460">Magnesium</keyword>
<keyword id="KW-0479">Metal-binding</keyword>
<keyword id="KW-0546">Nucleotide metabolism</keyword>
<evidence type="ECO:0000255" key="1">
    <source>
        <dbReference type="HAMAP-Rule" id="MF_00116"/>
    </source>
</evidence>
<reference key="1">
    <citation type="submission" date="2007-09" db="EMBL/GenBank/DDBJ databases">
        <title>Complete genome sequence of Rickettsia rickettsii.</title>
        <authorList>
            <person name="Madan A."/>
            <person name="Fahey J."/>
            <person name="Helton E."/>
            <person name="Ketteman M."/>
            <person name="Madan A."/>
            <person name="Rodrigues S."/>
            <person name="Sanchez A."/>
            <person name="Dasch G."/>
            <person name="Eremeeva M."/>
        </authorList>
    </citation>
    <scope>NUCLEOTIDE SEQUENCE [LARGE SCALE GENOMIC DNA]</scope>
    <source>
        <strain>Sheila Smith</strain>
    </source>
</reference>
<dbReference type="EC" id="3.6.1.23" evidence="1"/>
<dbReference type="EMBL" id="CP000848">
    <property type="protein sequence ID" value="ABV76156.1"/>
    <property type="molecule type" value="Genomic_DNA"/>
</dbReference>
<dbReference type="RefSeq" id="WP_012150745.1">
    <property type="nucleotide sequence ID" value="NZ_CP121767.1"/>
</dbReference>
<dbReference type="SMR" id="A8GRY1"/>
<dbReference type="GeneID" id="79937302"/>
<dbReference type="KEGG" id="rri:A1G_03095"/>
<dbReference type="HOGENOM" id="CLU_068508_1_2_5"/>
<dbReference type="UniPathway" id="UPA00610">
    <property type="reaction ID" value="UER00666"/>
</dbReference>
<dbReference type="Proteomes" id="UP000006832">
    <property type="component" value="Chromosome"/>
</dbReference>
<dbReference type="GO" id="GO:0004170">
    <property type="term" value="F:dUTP diphosphatase activity"/>
    <property type="evidence" value="ECO:0007669"/>
    <property type="project" value="UniProtKB-UniRule"/>
</dbReference>
<dbReference type="GO" id="GO:0000287">
    <property type="term" value="F:magnesium ion binding"/>
    <property type="evidence" value="ECO:0007669"/>
    <property type="project" value="UniProtKB-UniRule"/>
</dbReference>
<dbReference type="GO" id="GO:0006226">
    <property type="term" value="P:dUMP biosynthetic process"/>
    <property type="evidence" value="ECO:0007669"/>
    <property type="project" value="UniProtKB-UniRule"/>
</dbReference>
<dbReference type="GO" id="GO:0046081">
    <property type="term" value="P:dUTP catabolic process"/>
    <property type="evidence" value="ECO:0007669"/>
    <property type="project" value="InterPro"/>
</dbReference>
<dbReference type="CDD" id="cd07557">
    <property type="entry name" value="trimeric_dUTPase"/>
    <property type="match status" value="1"/>
</dbReference>
<dbReference type="FunFam" id="2.70.40.10:FF:000002">
    <property type="entry name" value="dUTP diphosphatase"/>
    <property type="match status" value="1"/>
</dbReference>
<dbReference type="Gene3D" id="2.70.40.10">
    <property type="match status" value="1"/>
</dbReference>
<dbReference type="HAMAP" id="MF_00116">
    <property type="entry name" value="dUTPase_bact"/>
    <property type="match status" value="1"/>
</dbReference>
<dbReference type="InterPro" id="IPR008181">
    <property type="entry name" value="dUTPase"/>
</dbReference>
<dbReference type="InterPro" id="IPR029054">
    <property type="entry name" value="dUTPase-like"/>
</dbReference>
<dbReference type="InterPro" id="IPR036157">
    <property type="entry name" value="dUTPase-like_sf"/>
</dbReference>
<dbReference type="InterPro" id="IPR033704">
    <property type="entry name" value="dUTPase_trimeric"/>
</dbReference>
<dbReference type="NCBIfam" id="TIGR00576">
    <property type="entry name" value="dut"/>
    <property type="match status" value="1"/>
</dbReference>
<dbReference type="NCBIfam" id="NF001862">
    <property type="entry name" value="PRK00601.1"/>
    <property type="match status" value="1"/>
</dbReference>
<dbReference type="PANTHER" id="PTHR11241">
    <property type="entry name" value="DEOXYURIDINE 5'-TRIPHOSPHATE NUCLEOTIDOHYDROLASE"/>
    <property type="match status" value="1"/>
</dbReference>
<dbReference type="PANTHER" id="PTHR11241:SF0">
    <property type="entry name" value="DEOXYURIDINE 5'-TRIPHOSPHATE NUCLEOTIDOHYDROLASE"/>
    <property type="match status" value="1"/>
</dbReference>
<dbReference type="Pfam" id="PF00692">
    <property type="entry name" value="dUTPase"/>
    <property type="match status" value="1"/>
</dbReference>
<dbReference type="SUPFAM" id="SSF51283">
    <property type="entry name" value="dUTPase-like"/>
    <property type="match status" value="1"/>
</dbReference>
<feature type="chain" id="PRO_1000015509" description="Deoxyuridine 5'-triphosphate nucleotidohydrolase">
    <location>
        <begin position="1"/>
        <end position="148"/>
    </location>
</feature>
<feature type="binding site" evidence="1">
    <location>
        <begin position="68"/>
        <end position="70"/>
    </location>
    <ligand>
        <name>substrate</name>
    </ligand>
</feature>
<feature type="binding site" evidence="1">
    <location>
        <position position="81"/>
    </location>
    <ligand>
        <name>substrate</name>
    </ligand>
</feature>
<feature type="binding site" evidence="1">
    <location>
        <begin position="85"/>
        <end position="87"/>
    </location>
    <ligand>
        <name>substrate</name>
    </ligand>
</feature>
<feature type="binding site" evidence="1">
    <location>
        <position position="95"/>
    </location>
    <ligand>
        <name>substrate</name>
    </ligand>
</feature>
<protein>
    <recommendedName>
        <fullName evidence="1">Deoxyuridine 5'-triphosphate nucleotidohydrolase</fullName>
        <shortName evidence="1">dUTPase</shortName>
        <ecNumber evidence="1">3.6.1.23</ecNumber>
    </recommendedName>
    <alternativeName>
        <fullName evidence="1">dUTP pyrophosphatase</fullName>
    </alternativeName>
</protein>
<sequence>MTITQVKIKKLENFSGSLPEYATEHSAGMDLIAANEQPITIKAAAIQLIPTGIAIALPDSFEAQIRPRSGLAVKHGITVANSPGTIDADYRGEIKVILINLGKEDFIIEKGMRIAQMIIAKYERILWEESISLMETMRGSGGFGSTGV</sequence>
<gene>
    <name evidence="1" type="primary">dut</name>
    <name type="ordered locus">A1G_03095</name>
</gene>